<protein>
    <recommendedName>
        <fullName>Zinc finger and SCAN domain-containing protein 26</fullName>
    </recommendedName>
    <alternativeName>
        <fullName>Zinc finger protein 187</fullName>
    </alternativeName>
</protein>
<organism>
    <name type="scientific">Bos taurus</name>
    <name type="common">Bovine</name>
    <dbReference type="NCBI Taxonomy" id="9913"/>
    <lineage>
        <taxon>Eukaryota</taxon>
        <taxon>Metazoa</taxon>
        <taxon>Chordata</taxon>
        <taxon>Craniata</taxon>
        <taxon>Vertebrata</taxon>
        <taxon>Euteleostomi</taxon>
        <taxon>Mammalia</taxon>
        <taxon>Eutheria</taxon>
        <taxon>Laurasiatheria</taxon>
        <taxon>Artiodactyla</taxon>
        <taxon>Ruminantia</taxon>
        <taxon>Pecora</taxon>
        <taxon>Bovidae</taxon>
        <taxon>Bovinae</taxon>
        <taxon>Bos</taxon>
    </lineage>
</organism>
<sequence length="479" mass="55276">MAIAWGTVPSLAPVNLKKEGLQVVKEDHLSAREQGVKLQGNGTGFRQEPLCKRFRQLRYEETTGPREALSRLRELCRQWLQPETHTKEQILELLVLEQFLTILPEELQARLREHHLESGEDAVVFLEDLQLELGGTGQQEDPNQAKKQEVLMEETAPGKATPERQVQPEGDVPQPEREKGEAKRIENGKLVVETDSCGRVESSGKPFEPMEVHYKDSNLDRQQAEPKEKTDCKCSEYGQAFFQHSDLIKHESSHRKEKLCEAEVCQSLSLPGHQKICSREKGHQCHECGKAFQRSSHLVRHQKIHLGEKPYQCKECGKVFSQNAGLLEHLRIHTGEKPYLCIHCGKNFRRSSHLNRHQRIHSQEEPCQCKECGKTFSQALLLTHHQRIHSHSRSHQCNECGKTFSLTSDLIRHHRIHTGEKPFKCTICQKAFRLNSHLAQHVRIHNEEKPYKCNECGEAFRQRSGLFQHQRYHHKNRLA</sequence>
<gene>
    <name type="primary">ZSCAN26</name>
    <name type="synonym">ZNF187</name>
</gene>
<accession>A6QNZ0</accession>
<name>ZSC26_BOVIN</name>
<feature type="chain" id="PRO_0000307312" description="Zinc finger and SCAN domain-containing protein 26">
    <location>
        <begin position="1"/>
        <end position="479"/>
    </location>
</feature>
<feature type="domain" description="SCAN box" evidence="3">
    <location>
        <begin position="51"/>
        <end position="133"/>
    </location>
</feature>
<feature type="zinc finger region" description="C2H2-type 1; degenerate" evidence="2">
    <location>
        <begin position="232"/>
        <end position="254"/>
    </location>
</feature>
<feature type="zinc finger region" description="C2H2-type 2" evidence="2">
    <location>
        <begin position="283"/>
        <end position="305"/>
    </location>
</feature>
<feature type="zinc finger region" description="C2H2-type 3" evidence="2">
    <location>
        <begin position="311"/>
        <end position="333"/>
    </location>
</feature>
<feature type="zinc finger region" description="C2H2-type 4" evidence="2">
    <location>
        <begin position="339"/>
        <end position="361"/>
    </location>
</feature>
<feature type="zinc finger region" description="C2H2-type 5" evidence="2">
    <location>
        <begin position="367"/>
        <end position="389"/>
    </location>
</feature>
<feature type="zinc finger region" description="C2H2-type 6" evidence="2">
    <location>
        <begin position="395"/>
        <end position="417"/>
    </location>
</feature>
<feature type="zinc finger region" description="C2H2-type 7" evidence="2">
    <location>
        <begin position="423"/>
        <end position="445"/>
    </location>
</feature>
<feature type="zinc finger region" description="C2H2-type 8" evidence="2">
    <location>
        <begin position="451"/>
        <end position="473"/>
    </location>
</feature>
<feature type="region of interest" description="Disordered" evidence="4">
    <location>
        <begin position="155"/>
        <end position="187"/>
    </location>
</feature>
<feature type="compositionally biased region" description="Basic and acidic residues" evidence="4">
    <location>
        <begin position="174"/>
        <end position="187"/>
    </location>
</feature>
<feature type="cross-link" description="Glycyl lysine isopeptide (Lys-Gly) (interchain with G-Cter in SUMO2)" evidence="1">
    <location>
        <position position="17"/>
    </location>
</feature>
<reference key="1">
    <citation type="submission" date="2007-07" db="EMBL/GenBank/DDBJ databases">
        <authorList>
            <consortium name="NIH - Mammalian Gene Collection (MGC) project"/>
        </authorList>
    </citation>
    <scope>NUCLEOTIDE SEQUENCE [LARGE SCALE MRNA]</scope>
    <source>
        <strain>Hereford</strain>
        <tissue>Brain cortex</tissue>
    </source>
</reference>
<comment type="function">
    <text evidence="5">May be involved in transcriptional regulation.</text>
</comment>
<comment type="subcellular location">
    <subcellularLocation>
        <location evidence="3">Nucleus</location>
    </subcellularLocation>
</comment>
<keyword id="KW-1017">Isopeptide bond</keyword>
<keyword id="KW-0479">Metal-binding</keyword>
<keyword id="KW-0539">Nucleus</keyword>
<keyword id="KW-1185">Reference proteome</keyword>
<keyword id="KW-0677">Repeat</keyword>
<keyword id="KW-0804">Transcription</keyword>
<keyword id="KW-0805">Transcription regulation</keyword>
<keyword id="KW-0832">Ubl conjugation</keyword>
<keyword id="KW-0862">Zinc</keyword>
<keyword id="KW-0863">Zinc-finger</keyword>
<evidence type="ECO:0000250" key="1">
    <source>
        <dbReference type="UniProtKB" id="Q16670"/>
    </source>
</evidence>
<evidence type="ECO:0000255" key="2">
    <source>
        <dbReference type="PROSITE-ProRule" id="PRU00042"/>
    </source>
</evidence>
<evidence type="ECO:0000255" key="3">
    <source>
        <dbReference type="PROSITE-ProRule" id="PRU00187"/>
    </source>
</evidence>
<evidence type="ECO:0000256" key="4">
    <source>
        <dbReference type="SAM" id="MobiDB-lite"/>
    </source>
</evidence>
<evidence type="ECO:0000305" key="5"/>
<proteinExistence type="evidence at transcript level"/>
<dbReference type="EMBL" id="BC149068">
    <property type="protein sequence ID" value="AAI49069.1"/>
    <property type="molecule type" value="mRNA"/>
</dbReference>
<dbReference type="RefSeq" id="NP_001095427.1">
    <property type="nucleotide sequence ID" value="NM_001101957.1"/>
</dbReference>
<dbReference type="SMR" id="A6QNZ0"/>
<dbReference type="FunCoup" id="A6QNZ0">
    <property type="interactions" value="656"/>
</dbReference>
<dbReference type="STRING" id="9913.ENSBTAP00000060673"/>
<dbReference type="PaxDb" id="9913-ENSBTAP00000035458"/>
<dbReference type="GeneID" id="512445"/>
<dbReference type="KEGG" id="bta:512445"/>
<dbReference type="CTD" id="7741"/>
<dbReference type="eggNOG" id="KOG1721">
    <property type="taxonomic scope" value="Eukaryota"/>
</dbReference>
<dbReference type="InParanoid" id="A6QNZ0"/>
<dbReference type="OrthoDB" id="6077919at2759"/>
<dbReference type="Proteomes" id="UP000009136">
    <property type="component" value="Unplaced"/>
</dbReference>
<dbReference type="GO" id="GO:0005634">
    <property type="term" value="C:nucleus"/>
    <property type="evidence" value="ECO:0007669"/>
    <property type="project" value="UniProtKB-SubCell"/>
</dbReference>
<dbReference type="GO" id="GO:0000981">
    <property type="term" value="F:DNA-binding transcription factor activity, RNA polymerase II-specific"/>
    <property type="evidence" value="ECO:0000318"/>
    <property type="project" value="GO_Central"/>
</dbReference>
<dbReference type="GO" id="GO:0000978">
    <property type="term" value="F:RNA polymerase II cis-regulatory region sequence-specific DNA binding"/>
    <property type="evidence" value="ECO:0000318"/>
    <property type="project" value="GO_Central"/>
</dbReference>
<dbReference type="GO" id="GO:0008270">
    <property type="term" value="F:zinc ion binding"/>
    <property type="evidence" value="ECO:0007669"/>
    <property type="project" value="UniProtKB-KW"/>
</dbReference>
<dbReference type="GO" id="GO:0006357">
    <property type="term" value="P:regulation of transcription by RNA polymerase II"/>
    <property type="evidence" value="ECO:0000318"/>
    <property type="project" value="GO_Central"/>
</dbReference>
<dbReference type="CDD" id="cd07936">
    <property type="entry name" value="SCAN"/>
    <property type="match status" value="1"/>
</dbReference>
<dbReference type="FunFam" id="3.30.160.60:FF:001991">
    <property type="entry name" value="Zinc finger and SCAN domain containing 26"/>
    <property type="match status" value="1"/>
</dbReference>
<dbReference type="FunFam" id="3.30.160.60:FF:000467">
    <property type="entry name" value="Zinc finger and SCAN domain-containing 21"/>
    <property type="match status" value="1"/>
</dbReference>
<dbReference type="FunFam" id="3.30.160.60:FF:001661">
    <property type="entry name" value="Zinc finger and SCAN domain-containing 26"/>
    <property type="match status" value="1"/>
</dbReference>
<dbReference type="FunFam" id="3.30.160.60:FF:001087">
    <property type="entry name" value="Zinc finger and SCAN domain-containing protein 26"/>
    <property type="match status" value="1"/>
</dbReference>
<dbReference type="FunFam" id="3.30.160.60:FF:002516">
    <property type="entry name" value="Zinc finger and SCAN domain-containing protein 26"/>
    <property type="match status" value="1"/>
</dbReference>
<dbReference type="FunFam" id="3.30.160.60:FF:001693">
    <property type="entry name" value="zinc finger and SCAN domain-containing protein 26 isoform X1"/>
    <property type="match status" value="1"/>
</dbReference>
<dbReference type="FunFam" id="3.30.160.60:FF:001100">
    <property type="entry name" value="Zinc finger protein 184"/>
    <property type="match status" value="1"/>
</dbReference>
<dbReference type="FunFam" id="1.10.4020.10:FF:000001">
    <property type="entry name" value="zinc finger protein 263 isoform X1"/>
    <property type="match status" value="1"/>
</dbReference>
<dbReference type="Gene3D" id="3.30.160.60">
    <property type="entry name" value="Classic Zinc Finger"/>
    <property type="match status" value="7"/>
</dbReference>
<dbReference type="Gene3D" id="1.10.4020.10">
    <property type="entry name" value="DNA breaking-rejoining enzymes"/>
    <property type="match status" value="1"/>
</dbReference>
<dbReference type="InterPro" id="IPR003309">
    <property type="entry name" value="SCAN_dom"/>
</dbReference>
<dbReference type="InterPro" id="IPR038269">
    <property type="entry name" value="SCAN_sf"/>
</dbReference>
<dbReference type="InterPro" id="IPR036236">
    <property type="entry name" value="Znf_C2H2_sf"/>
</dbReference>
<dbReference type="InterPro" id="IPR013087">
    <property type="entry name" value="Znf_C2H2_type"/>
</dbReference>
<dbReference type="PANTHER" id="PTHR23226">
    <property type="entry name" value="ZINC FINGER AND SCAN DOMAIN-CONTAINING"/>
    <property type="match status" value="1"/>
</dbReference>
<dbReference type="PANTHER" id="PTHR23226:SF366">
    <property type="entry name" value="ZINC FINGER PROTEIN ZFP2"/>
    <property type="match status" value="1"/>
</dbReference>
<dbReference type="Pfam" id="PF02023">
    <property type="entry name" value="SCAN"/>
    <property type="match status" value="1"/>
</dbReference>
<dbReference type="Pfam" id="PF00096">
    <property type="entry name" value="zf-C2H2"/>
    <property type="match status" value="7"/>
</dbReference>
<dbReference type="SMART" id="SM00431">
    <property type="entry name" value="SCAN"/>
    <property type="match status" value="1"/>
</dbReference>
<dbReference type="SMART" id="SM00355">
    <property type="entry name" value="ZnF_C2H2"/>
    <property type="match status" value="8"/>
</dbReference>
<dbReference type="SUPFAM" id="SSF57667">
    <property type="entry name" value="beta-beta-alpha zinc fingers"/>
    <property type="match status" value="5"/>
</dbReference>
<dbReference type="SUPFAM" id="SSF47353">
    <property type="entry name" value="Retrovirus capsid dimerization domain-like"/>
    <property type="match status" value="1"/>
</dbReference>
<dbReference type="PROSITE" id="PS50804">
    <property type="entry name" value="SCAN_BOX"/>
    <property type="match status" value="1"/>
</dbReference>
<dbReference type="PROSITE" id="PS00028">
    <property type="entry name" value="ZINC_FINGER_C2H2_1"/>
    <property type="match status" value="7"/>
</dbReference>
<dbReference type="PROSITE" id="PS50157">
    <property type="entry name" value="ZINC_FINGER_C2H2_2"/>
    <property type="match status" value="8"/>
</dbReference>